<reference key="1">
    <citation type="journal article" date="2000" name="Nature">
        <title>The genome sequence of the thermoacidophilic scavenger Thermoplasma acidophilum.</title>
        <authorList>
            <person name="Ruepp A."/>
            <person name="Graml W."/>
            <person name="Santos-Martinez M.-L."/>
            <person name="Koretke K.K."/>
            <person name="Volker C."/>
            <person name="Mewes H.-W."/>
            <person name="Frishman D."/>
            <person name="Stocker S."/>
            <person name="Lupas A.N."/>
            <person name="Baumeister W."/>
        </authorList>
    </citation>
    <scope>NUCLEOTIDE SEQUENCE [LARGE SCALE GENOMIC DNA]</scope>
    <source>
        <strain>ATCC 25905 / DSM 1728 / JCM 9062 / NBRC 15155 / AMRC-C165</strain>
    </source>
</reference>
<evidence type="ECO:0000255" key="1">
    <source>
        <dbReference type="HAMAP-Rule" id="MF_00372"/>
    </source>
</evidence>
<dbReference type="EC" id="3.5.2.7" evidence="1"/>
<dbReference type="EMBL" id="AL445063">
    <property type="protein sequence ID" value="CAC11383.1"/>
    <property type="molecule type" value="Genomic_DNA"/>
</dbReference>
<dbReference type="RefSeq" id="WP_010900667.1">
    <property type="nucleotide sequence ID" value="NC_002578.1"/>
</dbReference>
<dbReference type="SMR" id="Q9HLJ0"/>
<dbReference type="FunCoup" id="Q9HLJ0">
    <property type="interactions" value="5"/>
</dbReference>
<dbReference type="STRING" id="273075.gene:9571455"/>
<dbReference type="PaxDb" id="273075-Ta0238"/>
<dbReference type="EnsemblBacteria" id="CAC11383">
    <property type="protein sequence ID" value="CAC11383"/>
    <property type="gene ID" value="CAC11383"/>
</dbReference>
<dbReference type="KEGG" id="tac:Ta0238"/>
<dbReference type="eggNOG" id="arCOG00696">
    <property type="taxonomic scope" value="Archaea"/>
</dbReference>
<dbReference type="HOGENOM" id="CLU_041647_1_0_2"/>
<dbReference type="InParanoid" id="Q9HLJ0"/>
<dbReference type="OrthoDB" id="24954at2157"/>
<dbReference type="UniPathway" id="UPA00379">
    <property type="reaction ID" value="UER00551"/>
</dbReference>
<dbReference type="Proteomes" id="UP000001024">
    <property type="component" value="Chromosome"/>
</dbReference>
<dbReference type="GO" id="GO:0005737">
    <property type="term" value="C:cytoplasm"/>
    <property type="evidence" value="ECO:0007669"/>
    <property type="project" value="UniProtKB-SubCell"/>
</dbReference>
<dbReference type="GO" id="GO:0050480">
    <property type="term" value="F:imidazolonepropionase activity"/>
    <property type="evidence" value="ECO:0007669"/>
    <property type="project" value="UniProtKB-UniRule"/>
</dbReference>
<dbReference type="GO" id="GO:0005506">
    <property type="term" value="F:iron ion binding"/>
    <property type="evidence" value="ECO:0007669"/>
    <property type="project" value="UniProtKB-UniRule"/>
</dbReference>
<dbReference type="GO" id="GO:0008270">
    <property type="term" value="F:zinc ion binding"/>
    <property type="evidence" value="ECO:0007669"/>
    <property type="project" value="UniProtKB-UniRule"/>
</dbReference>
<dbReference type="GO" id="GO:0019556">
    <property type="term" value="P:L-histidine catabolic process to glutamate and formamide"/>
    <property type="evidence" value="ECO:0007669"/>
    <property type="project" value="UniProtKB-UniPathway"/>
</dbReference>
<dbReference type="GO" id="GO:0019557">
    <property type="term" value="P:L-histidine catabolic process to glutamate and formate"/>
    <property type="evidence" value="ECO:0007669"/>
    <property type="project" value="UniProtKB-UniPathway"/>
</dbReference>
<dbReference type="CDD" id="cd01296">
    <property type="entry name" value="Imidazolone-5PH"/>
    <property type="match status" value="1"/>
</dbReference>
<dbReference type="Gene3D" id="3.20.20.140">
    <property type="entry name" value="Metal-dependent hydrolases"/>
    <property type="match status" value="1"/>
</dbReference>
<dbReference type="Gene3D" id="2.30.40.10">
    <property type="entry name" value="Urease, subunit C, domain 1"/>
    <property type="match status" value="1"/>
</dbReference>
<dbReference type="HAMAP" id="MF_00372">
    <property type="entry name" value="HutI"/>
    <property type="match status" value="1"/>
</dbReference>
<dbReference type="InterPro" id="IPR006680">
    <property type="entry name" value="Amidohydro-rel"/>
</dbReference>
<dbReference type="InterPro" id="IPR005920">
    <property type="entry name" value="HutI"/>
</dbReference>
<dbReference type="InterPro" id="IPR011059">
    <property type="entry name" value="Metal-dep_hydrolase_composite"/>
</dbReference>
<dbReference type="InterPro" id="IPR032466">
    <property type="entry name" value="Metal_Hydrolase"/>
</dbReference>
<dbReference type="NCBIfam" id="TIGR01224">
    <property type="entry name" value="hutI"/>
    <property type="match status" value="1"/>
</dbReference>
<dbReference type="PANTHER" id="PTHR42752">
    <property type="entry name" value="IMIDAZOLONEPROPIONASE"/>
    <property type="match status" value="1"/>
</dbReference>
<dbReference type="PANTHER" id="PTHR42752:SF1">
    <property type="entry name" value="IMIDAZOLONEPROPIONASE-RELATED"/>
    <property type="match status" value="1"/>
</dbReference>
<dbReference type="Pfam" id="PF01979">
    <property type="entry name" value="Amidohydro_1"/>
    <property type="match status" value="1"/>
</dbReference>
<dbReference type="SUPFAM" id="SSF51338">
    <property type="entry name" value="Composite domain of metallo-dependent hydrolases"/>
    <property type="match status" value="1"/>
</dbReference>
<dbReference type="SUPFAM" id="SSF51556">
    <property type="entry name" value="Metallo-dependent hydrolases"/>
    <property type="match status" value="1"/>
</dbReference>
<feature type="chain" id="PRO_0000160979" description="Imidazolonepropionase">
    <location>
        <begin position="1"/>
        <end position="410"/>
    </location>
</feature>
<feature type="binding site" evidence="1">
    <location>
        <position position="71"/>
    </location>
    <ligand>
        <name>Fe(3+)</name>
        <dbReference type="ChEBI" id="CHEBI:29034"/>
    </ligand>
</feature>
<feature type="binding site" evidence="1">
    <location>
        <position position="71"/>
    </location>
    <ligand>
        <name>Zn(2+)</name>
        <dbReference type="ChEBI" id="CHEBI:29105"/>
    </ligand>
</feature>
<feature type="binding site" evidence="1">
    <location>
        <position position="73"/>
    </location>
    <ligand>
        <name>Fe(3+)</name>
        <dbReference type="ChEBI" id="CHEBI:29034"/>
    </ligand>
</feature>
<feature type="binding site" evidence="1">
    <location>
        <position position="73"/>
    </location>
    <ligand>
        <name>Zn(2+)</name>
        <dbReference type="ChEBI" id="CHEBI:29105"/>
    </ligand>
</feature>
<feature type="binding site" evidence="1">
    <location>
        <position position="80"/>
    </location>
    <ligand>
        <name>4-imidazolone-5-propanoate</name>
        <dbReference type="ChEBI" id="CHEBI:77893"/>
    </ligand>
</feature>
<feature type="binding site" evidence="1">
    <location>
        <position position="143"/>
    </location>
    <ligand>
        <name>4-imidazolone-5-propanoate</name>
        <dbReference type="ChEBI" id="CHEBI:77893"/>
    </ligand>
</feature>
<feature type="binding site" evidence="1">
    <location>
        <position position="143"/>
    </location>
    <ligand>
        <name>N-formimidoyl-L-glutamate</name>
        <dbReference type="ChEBI" id="CHEBI:58928"/>
    </ligand>
</feature>
<feature type="binding site" evidence="1">
    <location>
        <position position="175"/>
    </location>
    <ligand>
        <name>4-imidazolone-5-propanoate</name>
        <dbReference type="ChEBI" id="CHEBI:77893"/>
    </ligand>
</feature>
<feature type="binding site" evidence="1">
    <location>
        <position position="235"/>
    </location>
    <ligand>
        <name>Fe(3+)</name>
        <dbReference type="ChEBI" id="CHEBI:29034"/>
    </ligand>
</feature>
<feature type="binding site" evidence="1">
    <location>
        <position position="235"/>
    </location>
    <ligand>
        <name>Zn(2+)</name>
        <dbReference type="ChEBI" id="CHEBI:29105"/>
    </ligand>
</feature>
<feature type="binding site" evidence="1">
    <location>
        <position position="238"/>
    </location>
    <ligand>
        <name>4-imidazolone-5-propanoate</name>
        <dbReference type="ChEBI" id="CHEBI:77893"/>
    </ligand>
</feature>
<feature type="binding site" evidence="1">
    <location>
        <position position="309"/>
    </location>
    <ligand>
        <name>Fe(3+)</name>
        <dbReference type="ChEBI" id="CHEBI:29034"/>
    </ligand>
</feature>
<feature type="binding site" evidence="1">
    <location>
        <position position="309"/>
    </location>
    <ligand>
        <name>Zn(2+)</name>
        <dbReference type="ChEBI" id="CHEBI:29105"/>
    </ligand>
</feature>
<organism>
    <name type="scientific">Thermoplasma acidophilum (strain ATCC 25905 / DSM 1728 / JCM 9062 / NBRC 15155 / AMRC-C165)</name>
    <dbReference type="NCBI Taxonomy" id="273075"/>
    <lineage>
        <taxon>Archaea</taxon>
        <taxon>Methanobacteriati</taxon>
        <taxon>Thermoplasmatota</taxon>
        <taxon>Thermoplasmata</taxon>
        <taxon>Thermoplasmatales</taxon>
        <taxon>Thermoplasmataceae</taxon>
        <taxon>Thermoplasma</taxon>
    </lineage>
</organism>
<protein>
    <recommendedName>
        <fullName evidence="1">Imidazolonepropionase</fullName>
        <ecNumber evidence="1">3.5.2.7</ecNumber>
    </recommendedName>
    <alternativeName>
        <fullName evidence="1">Imidazolone-5-propionate hydrolase</fullName>
    </alternativeName>
</protein>
<comment type="function">
    <text evidence="1">Catalyzes the hydrolytic cleavage of the carbon-nitrogen bond in imidazolone-5-propanoate to yield N-formimidoyl-L-glutamate. It is the third step in the universal histidine degradation pathway.</text>
</comment>
<comment type="catalytic activity">
    <reaction evidence="1">
        <text>4-imidazolone-5-propanoate + H2O = N-formimidoyl-L-glutamate</text>
        <dbReference type="Rhea" id="RHEA:23660"/>
        <dbReference type="ChEBI" id="CHEBI:15377"/>
        <dbReference type="ChEBI" id="CHEBI:58928"/>
        <dbReference type="ChEBI" id="CHEBI:77893"/>
        <dbReference type="EC" id="3.5.2.7"/>
    </reaction>
</comment>
<comment type="cofactor">
    <cofactor evidence="1">
        <name>Zn(2+)</name>
        <dbReference type="ChEBI" id="CHEBI:29105"/>
    </cofactor>
    <cofactor evidence="1">
        <name>Fe(3+)</name>
        <dbReference type="ChEBI" id="CHEBI:29034"/>
    </cofactor>
    <text evidence="1">Binds 1 zinc or iron ion per subunit.</text>
</comment>
<comment type="pathway">
    <text evidence="1">Amino-acid degradation; L-histidine degradation into L-glutamate; N-formimidoyl-L-glutamate from L-histidine: step 3/3.</text>
</comment>
<comment type="subcellular location">
    <subcellularLocation>
        <location evidence="1">Cytoplasm</location>
    </subcellularLocation>
</comment>
<comment type="similarity">
    <text evidence="1">Belongs to the metallo-dependent hydrolases superfamily. HutI family.</text>
</comment>
<keyword id="KW-0963">Cytoplasm</keyword>
<keyword id="KW-0369">Histidine metabolism</keyword>
<keyword id="KW-0378">Hydrolase</keyword>
<keyword id="KW-0408">Iron</keyword>
<keyword id="KW-0479">Metal-binding</keyword>
<keyword id="KW-1185">Reference proteome</keyword>
<keyword id="KW-0862">Zinc</keyword>
<proteinExistence type="inferred from homology"/>
<accession>Q9HLJ0</accession>
<gene>
    <name evidence="1" type="primary">hutI</name>
    <name type="ordered locus">Ta0238</name>
</gene>
<sequence>MRALTNLSQIATGEGRSFLSGERQADVKVYENHSILIHGGRIAEITRAVPPGVEEIDCGGGVAVPGFVDPHTHIAFAGNRVQEFYMRIRGTSYLDILRSGNGIYRTIRDTVNADENRIFKETISRVWSAVRRGTTTMEMKTGYGLDQRGEEKILSAIEVIKNTGPISVVPTYLAHVVPQDVQENAYVEGILETVKRNRQRISYADIFCDAGAFSPEASRRFLEAAIAMGIPARIHTNEIENVGCVKKTRGLPIVSYDHMIHFDDADLDIVKENGSSVTLLPITVFALNEAYPDARRIIDRGIPVSIATDISPLNMNDDMIFAMHLAVRNNHMNAEEVLNAATINPAASLGLAEKKGTIESGKDADLVVLSARSYDEIPYLYGLDIVSMTISRGNILYSRGDHGITDTSEA</sequence>
<name>HUTI_THEAC</name>